<comment type="function">
    <text evidence="1">Cell wall formation. Catalyzes the transfer of a GlcNAc subunit on undecaprenyl-pyrophosphoryl-MurNAc-pentapeptide (lipid intermediate I) to form undecaprenyl-pyrophosphoryl-MurNAc-(pentapeptide)GlcNAc (lipid intermediate II).</text>
</comment>
<comment type="catalytic activity">
    <reaction evidence="1">
        <text>di-trans,octa-cis-undecaprenyl diphospho-N-acetyl-alpha-D-muramoyl-L-alanyl-D-glutamyl-meso-2,6-diaminopimeloyl-D-alanyl-D-alanine + UDP-N-acetyl-alpha-D-glucosamine = di-trans,octa-cis-undecaprenyl diphospho-[N-acetyl-alpha-D-glucosaminyl-(1-&gt;4)]-N-acetyl-alpha-D-muramoyl-L-alanyl-D-glutamyl-meso-2,6-diaminopimeloyl-D-alanyl-D-alanine + UDP + H(+)</text>
        <dbReference type="Rhea" id="RHEA:31227"/>
        <dbReference type="ChEBI" id="CHEBI:15378"/>
        <dbReference type="ChEBI" id="CHEBI:57705"/>
        <dbReference type="ChEBI" id="CHEBI:58223"/>
        <dbReference type="ChEBI" id="CHEBI:61387"/>
        <dbReference type="ChEBI" id="CHEBI:61388"/>
        <dbReference type="EC" id="2.4.1.227"/>
    </reaction>
</comment>
<comment type="pathway">
    <text evidence="1">Cell wall biogenesis; peptidoglycan biosynthesis.</text>
</comment>
<comment type="subcellular location">
    <subcellularLocation>
        <location evidence="1">Cell inner membrane</location>
        <topology evidence="1">Peripheral membrane protein</topology>
        <orientation evidence="1">Cytoplasmic side</orientation>
    </subcellularLocation>
</comment>
<comment type="similarity">
    <text evidence="1">Belongs to the glycosyltransferase 28 family. MurG subfamily.</text>
</comment>
<dbReference type="EC" id="2.4.1.227" evidence="1"/>
<dbReference type="EMBL" id="AE005673">
    <property type="protein sequence ID" value="AAK24522.1"/>
    <property type="molecule type" value="Genomic_DNA"/>
</dbReference>
<dbReference type="PIR" id="F87565">
    <property type="entry name" value="F87565"/>
</dbReference>
<dbReference type="RefSeq" id="NP_421354.1">
    <property type="nucleotide sequence ID" value="NC_002696.2"/>
</dbReference>
<dbReference type="RefSeq" id="WP_010920408.1">
    <property type="nucleotide sequence ID" value="NC_002696.2"/>
</dbReference>
<dbReference type="SMR" id="Q9A5A1"/>
<dbReference type="STRING" id="190650.CC_2551"/>
<dbReference type="CAZy" id="GT28">
    <property type="family name" value="Glycosyltransferase Family 28"/>
</dbReference>
<dbReference type="EnsemblBacteria" id="AAK24522">
    <property type="protein sequence ID" value="AAK24522"/>
    <property type="gene ID" value="CC_2551"/>
</dbReference>
<dbReference type="KEGG" id="ccr:CC_2551"/>
<dbReference type="PATRIC" id="fig|190650.5.peg.2564"/>
<dbReference type="eggNOG" id="COG0707">
    <property type="taxonomic scope" value="Bacteria"/>
</dbReference>
<dbReference type="HOGENOM" id="CLU_037404_2_1_5"/>
<dbReference type="BioCyc" id="CAULO:CC2551-MONOMER"/>
<dbReference type="UniPathway" id="UPA00219"/>
<dbReference type="Proteomes" id="UP000001816">
    <property type="component" value="Chromosome"/>
</dbReference>
<dbReference type="GO" id="GO:0005886">
    <property type="term" value="C:plasma membrane"/>
    <property type="evidence" value="ECO:0007669"/>
    <property type="project" value="UniProtKB-SubCell"/>
</dbReference>
<dbReference type="GO" id="GO:0051991">
    <property type="term" value="F:UDP-N-acetyl-D-glucosamine:N-acetylmuramoyl-L-alanyl-D-glutamyl-meso-2,6-diaminopimelyl-D-alanyl-D-alanine-diphosphoundecaprenol 4-beta-N-acetylglucosaminlytransferase activity"/>
    <property type="evidence" value="ECO:0007669"/>
    <property type="project" value="RHEA"/>
</dbReference>
<dbReference type="GO" id="GO:0050511">
    <property type="term" value="F:undecaprenyldiphospho-muramoylpentapeptide beta-N-acetylglucosaminyltransferase activity"/>
    <property type="evidence" value="ECO:0007669"/>
    <property type="project" value="UniProtKB-UniRule"/>
</dbReference>
<dbReference type="GO" id="GO:0005975">
    <property type="term" value="P:carbohydrate metabolic process"/>
    <property type="evidence" value="ECO:0007669"/>
    <property type="project" value="InterPro"/>
</dbReference>
<dbReference type="GO" id="GO:0051301">
    <property type="term" value="P:cell division"/>
    <property type="evidence" value="ECO:0007669"/>
    <property type="project" value="UniProtKB-KW"/>
</dbReference>
<dbReference type="GO" id="GO:0071555">
    <property type="term" value="P:cell wall organization"/>
    <property type="evidence" value="ECO:0007669"/>
    <property type="project" value="UniProtKB-KW"/>
</dbReference>
<dbReference type="GO" id="GO:0030259">
    <property type="term" value="P:lipid glycosylation"/>
    <property type="evidence" value="ECO:0007669"/>
    <property type="project" value="UniProtKB-UniRule"/>
</dbReference>
<dbReference type="GO" id="GO:0009252">
    <property type="term" value="P:peptidoglycan biosynthetic process"/>
    <property type="evidence" value="ECO:0007669"/>
    <property type="project" value="UniProtKB-UniRule"/>
</dbReference>
<dbReference type="GO" id="GO:0008360">
    <property type="term" value="P:regulation of cell shape"/>
    <property type="evidence" value="ECO:0007669"/>
    <property type="project" value="UniProtKB-KW"/>
</dbReference>
<dbReference type="CDD" id="cd03785">
    <property type="entry name" value="GT28_MurG"/>
    <property type="match status" value="1"/>
</dbReference>
<dbReference type="Gene3D" id="3.40.50.2000">
    <property type="entry name" value="Glycogen Phosphorylase B"/>
    <property type="match status" value="2"/>
</dbReference>
<dbReference type="HAMAP" id="MF_00033">
    <property type="entry name" value="MurG"/>
    <property type="match status" value="1"/>
</dbReference>
<dbReference type="InterPro" id="IPR006009">
    <property type="entry name" value="GlcNAc_MurG"/>
</dbReference>
<dbReference type="InterPro" id="IPR007235">
    <property type="entry name" value="Glyco_trans_28_C"/>
</dbReference>
<dbReference type="InterPro" id="IPR004276">
    <property type="entry name" value="GlycoTrans_28_N"/>
</dbReference>
<dbReference type="NCBIfam" id="TIGR01133">
    <property type="entry name" value="murG"/>
    <property type="match status" value="1"/>
</dbReference>
<dbReference type="PANTHER" id="PTHR21015:SF22">
    <property type="entry name" value="GLYCOSYLTRANSFERASE"/>
    <property type="match status" value="1"/>
</dbReference>
<dbReference type="PANTHER" id="PTHR21015">
    <property type="entry name" value="UDP-N-ACETYLGLUCOSAMINE--N-ACETYLMURAMYL-(PENTAPEPTIDE) PYROPHOSPHORYL-UNDECAPRENOL N-ACETYLGLUCOSAMINE TRANSFERASE 1"/>
    <property type="match status" value="1"/>
</dbReference>
<dbReference type="Pfam" id="PF04101">
    <property type="entry name" value="Glyco_tran_28_C"/>
    <property type="match status" value="1"/>
</dbReference>
<dbReference type="Pfam" id="PF03033">
    <property type="entry name" value="Glyco_transf_28"/>
    <property type="match status" value="1"/>
</dbReference>
<dbReference type="SUPFAM" id="SSF53756">
    <property type="entry name" value="UDP-Glycosyltransferase/glycogen phosphorylase"/>
    <property type="match status" value="1"/>
</dbReference>
<protein>
    <recommendedName>
        <fullName evidence="1">UDP-N-acetylglucosamine--N-acetylmuramyl-(pentapeptide) pyrophosphoryl-undecaprenol N-acetylglucosamine transferase</fullName>
        <ecNumber evidence="1">2.4.1.227</ecNumber>
    </recommendedName>
    <alternativeName>
        <fullName evidence="1">Undecaprenyl-PP-MurNAc-pentapeptide-UDPGlcNAc GlcNAc transferase</fullName>
    </alternativeName>
</protein>
<evidence type="ECO:0000255" key="1">
    <source>
        <dbReference type="HAMAP-Rule" id="MF_00033"/>
    </source>
</evidence>
<feature type="chain" id="PRO_0000109158" description="UDP-N-acetylglucosamine--N-acetylmuramyl-(pentapeptide) pyrophosphoryl-undecaprenol N-acetylglucosamine transferase">
    <location>
        <begin position="1"/>
        <end position="361"/>
    </location>
</feature>
<feature type="binding site" evidence="1">
    <location>
        <begin position="12"/>
        <end position="14"/>
    </location>
    <ligand>
        <name>UDP-N-acetyl-alpha-D-glucosamine</name>
        <dbReference type="ChEBI" id="CHEBI:57705"/>
    </ligand>
</feature>
<feature type="binding site" evidence="1">
    <location>
        <position position="123"/>
    </location>
    <ligand>
        <name>UDP-N-acetyl-alpha-D-glucosamine</name>
        <dbReference type="ChEBI" id="CHEBI:57705"/>
    </ligand>
</feature>
<feature type="binding site" evidence="1">
    <location>
        <position position="166"/>
    </location>
    <ligand>
        <name>UDP-N-acetyl-alpha-D-glucosamine</name>
        <dbReference type="ChEBI" id="CHEBI:57705"/>
    </ligand>
</feature>
<feature type="binding site" evidence="1">
    <location>
        <position position="192"/>
    </location>
    <ligand>
        <name>UDP-N-acetyl-alpha-D-glucosamine</name>
        <dbReference type="ChEBI" id="CHEBI:57705"/>
    </ligand>
</feature>
<feature type="binding site" evidence="1">
    <location>
        <position position="293"/>
    </location>
    <ligand>
        <name>UDP-N-acetyl-alpha-D-glucosamine</name>
        <dbReference type="ChEBI" id="CHEBI:57705"/>
    </ligand>
</feature>
<name>MURG_CAUVC</name>
<sequence length="361" mass="38310">MSKLAVVAAGGTGGHMFPAQALAEALAARGWRVVLATDDRGALYADKFPAEERLALSAATAKSNDPLGMIKAGFVVLQGVMEARAAFKRLDPAVVVGFGGYPALPALLGALSQGRPTVIHEQNAVLGRVNRFLAPRVNEVACAFPILEKATPAVKACAHVVGNPVRPPVRALFDVPYLAPEVQLRVLVTGGSQGARLLSELIPEAVAKLPEEMRGRLKVFQQARAESMEQARKVYRNAMVECEVAPFFRDMAGYLRQSHLVIGRSGASTCTELAVAGRPSILIPLKIAADDHQRFNARLLEEAGGAAVCLEDELTVDVMAAALKALLSKPERLEKMAAGARSAAKPNAAEELADLVEKTAR</sequence>
<organism>
    <name type="scientific">Caulobacter vibrioides (strain ATCC 19089 / CIP 103742 / CB 15)</name>
    <name type="common">Caulobacter crescentus</name>
    <dbReference type="NCBI Taxonomy" id="190650"/>
    <lineage>
        <taxon>Bacteria</taxon>
        <taxon>Pseudomonadati</taxon>
        <taxon>Pseudomonadota</taxon>
        <taxon>Alphaproteobacteria</taxon>
        <taxon>Caulobacterales</taxon>
        <taxon>Caulobacteraceae</taxon>
        <taxon>Caulobacter</taxon>
    </lineage>
</organism>
<accession>Q9A5A1</accession>
<proteinExistence type="inferred from homology"/>
<reference key="1">
    <citation type="journal article" date="2001" name="Proc. Natl. Acad. Sci. U.S.A.">
        <title>Complete genome sequence of Caulobacter crescentus.</title>
        <authorList>
            <person name="Nierman W.C."/>
            <person name="Feldblyum T.V."/>
            <person name="Laub M.T."/>
            <person name="Paulsen I.T."/>
            <person name="Nelson K.E."/>
            <person name="Eisen J.A."/>
            <person name="Heidelberg J.F."/>
            <person name="Alley M.R.K."/>
            <person name="Ohta N."/>
            <person name="Maddock J.R."/>
            <person name="Potocka I."/>
            <person name="Nelson W.C."/>
            <person name="Newton A."/>
            <person name="Stephens C."/>
            <person name="Phadke N.D."/>
            <person name="Ely B."/>
            <person name="DeBoy R.T."/>
            <person name="Dodson R.J."/>
            <person name="Durkin A.S."/>
            <person name="Gwinn M.L."/>
            <person name="Haft D.H."/>
            <person name="Kolonay J.F."/>
            <person name="Smit J."/>
            <person name="Craven M.B."/>
            <person name="Khouri H.M."/>
            <person name="Shetty J."/>
            <person name="Berry K.J."/>
            <person name="Utterback T.R."/>
            <person name="Tran K."/>
            <person name="Wolf A.M."/>
            <person name="Vamathevan J.J."/>
            <person name="Ermolaeva M.D."/>
            <person name="White O."/>
            <person name="Salzberg S.L."/>
            <person name="Venter J.C."/>
            <person name="Shapiro L."/>
            <person name="Fraser C.M."/>
        </authorList>
    </citation>
    <scope>NUCLEOTIDE SEQUENCE [LARGE SCALE GENOMIC DNA]</scope>
    <source>
        <strain>ATCC 19089 / CIP 103742 / CB 15</strain>
    </source>
</reference>
<gene>
    <name evidence="1" type="primary">murG</name>
    <name type="ordered locus">CC_2551</name>
</gene>
<keyword id="KW-0131">Cell cycle</keyword>
<keyword id="KW-0132">Cell division</keyword>
<keyword id="KW-0997">Cell inner membrane</keyword>
<keyword id="KW-1003">Cell membrane</keyword>
<keyword id="KW-0133">Cell shape</keyword>
<keyword id="KW-0961">Cell wall biogenesis/degradation</keyword>
<keyword id="KW-0328">Glycosyltransferase</keyword>
<keyword id="KW-0472">Membrane</keyword>
<keyword id="KW-0573">Peptidoglycan synthesis</keyword>
<keyword id="KW-1185">Reference proteome</keyword>
<keyword id="KW-0808">Transferase</keyword>